<organism>
    <name type="scientific">Mus musculus</name>
    <name type="common">Mouse</name>
    <dbReference type="NCBI Taxonomy" id="10090"/>
    <lineage>
        <taxon>Eukaryota</taxon>
        <taxon>Metazoa</taxon>
        <taxon>Chordata</taxon>
        <taxon>Craniata</taxon>
        <taxon>Vertebrata</taxon>
        <taxon>Euteleostomi</taxon>
        <taxon>Mammalia</taxon>
        <taxon>Eutheria</taxon>
        <taxon>Euarchontoglires</taxon>
        <taxon>Glires</taxon>
        <taxon>Rodentia</taxon>
        <taxon>Myomorpha</taxon>
        <taxon>Muroidea</taxon>
        <taxon>Muridae</taxon>
        <taxon>Murinae</taxon>
        <taxon>Mus</taxon>
        <taxon>Mus</taxon>
    </lineage>
</organism>
<proteinExistence type="evidence at protein level"/>
<evidence type="ECO:0000250" key="1"/>
<evidence type="ECO:0000250" key="2">
    <source>
        <dbReference type="UniProtKB" id="P50552"/>
    </source>
</evidence>
<evidence type="ECO:0000255" key="3"/>
<evidence type="ECO:0000255" key="4">
    <source>
        <dbReference type="PROSITE-ProRule" id="PRU00410"/>
    </source>
</evidence>
<evidence type="ECO:0000256" key="5">
    <source>
        <dbReference type="SAM" id="MobiDB-lite"/>
    </source>
</evidence>
<evidence type="ECO:0000269" key="6">
    <source>
    </source>
</evidence>
<evidence type="ECO:0000269" key="7">
    <source>
    </source>
</evidence>
<evidence type="ECO:0000269" key="8">
    <source>
    </source>
</evidence>
<evidence type="ECO:0000269" key="9">
    <source>
    </source>
</evidence>
<evidence type="ECO:0000269" key="10">
    <source>
    </source>
</evidence>
<evidence type="ECO:0000269" key="11">
    <source>
    </source>
</evidence>
<evidence type="ECO:0000269" key="12">
    <source>
    </source>
</evidence>
<evidence type="ECO:0000269" key="13">
    <source>
    </source>
</evidence>
<evidence type="ECO:0000305" key="14"/>
<evidence type="ECO:0007744" key="15">
    <source>
    </source>
</evidence>
<reference key="1">
    <citation type="journal article" date="1996" name="Genomics">
        <title>Cloning of the VASP (vasodilator-stimulated phosphoprotein) genes in human and mouse: structure, sequence, and chromosomal localization.</title>
        <authorList>
            <person name="Zimmer M."/>
            <person name="Fink T."/>
            <person name="Fischer L."/>
            <person name="Hauser W."/>
            <person name="Scherer K."/>
            <person name="Lichter P."/>
            <person name="Walter U."/>
        </authorList>
    </citation>
    <scope>NUCLEOTIDE SEQUENCE [GENOMIC DNA]</scope>
    <scope>VARIANT THR-209</scope>
    <source>
        <strain>129</strain>
    </source>
</reference>
<reference key="2">
    <citation type="journal article" date="1999" name="J. Biol. Chem.">
        <title>Cyclic AMP- and cyclic GMP-dependent protein kinases differ in their regulation of cyclic AMP response element-dependent gene transcription.</title>
        <authorList>
            <person name="Collins S.P."/>
            <person name="Uhler M.D."/>
        </authorList>
    </citation>
    <scope>NUCLEOTIDE SEQUENCE [MRNA]</scope>
    <scope>PHOSPHORYLATION</scope>
    <source>
        <strain>C57BL/6J</strain>
    </source>
</reference>
<reference key="3">
    <citation type="journal article" date="2005" name="Science">
        <title>The transcriptional landscape of the mammalian genome.</title>
        <authorList>
            <person name="Carninci P."/>
            <person name="Kasukawa T."/>
            <person name="Katayama S."/>
            <person name="Gough J."/>
            <person name="Frith M.C."/>
            <person name="Maeda N."/>
            <person name="Oyama R."/>
            <person name="Ravasi T."/>
            <person name="Lenhard B."/>
            <person name="Wells C."/>
            <person name="Kodzius R."/>
            <person name="Shimokawa K."/>
            <person name="Bajic V.B."/>
            <person name="Brenner S.E."/>
            <person name="Batalov S."/>
            <person name="Forrest A.R."/>
            <person name="Zavolan M."/>
            <person name="Davis M.J."/>
            <person name="Wilming L.G."/>
            <person name="Aidinis V."/>
            <person name="Allen J.E."/>
            <person name="Ambesi-Impiombato A."/>
            <person name="Apweiler R."/>
            <person name="Aturaliya R.N."/>
            <person name="Bailey T.L."/>
            <person name="Bansal M."/>
            <person name="Baxter L."/>
            <person name="Beisel K.W."/>
            <person name="Bersano T."/>
            <person name="Bono H."/>
            <person name="Chalk A.M."/>
            <person name="Chiu K.P."/>
            <person name="Choudhary V."/>
            <person name="Christoffels A."/>
            <person name="Clutterbuck D.R."/>
            <person name="Crowe M.L."/>
            <person name="Dalla E."/>
            <person name="Dalrymple B.P."/>
            <person name="de Bono B."/>
            <person name="Della Gatta G."/>
            <person name="di Bernardo D."/>
            <person name="Down T."/>
            <person name="Engstrom P."/>
            <person name="Fagiolini M."/>
            <person name="Faulkner G."/>
            <person name="Fletcher C.F."/>
            <person name="Fukushima T."/>
            <person name="Furuno M."/>
            <person name="Futaki S."/>
            <person name="Gariboldi M."/>
            <person name="Georgii-Hemming P."/>
            <person name="Gingeras T.R."/>
            <person name="Gojobori T."/>
            <person name="Green R.E."/>
            <person name="Gustincich S."/>
            <person name="Harbers M."/>
            <person name="Hayashi Y."/>
            <person name="Hensch T.K."/>
            <person name="Hirokawa N."/>
            <person name="Hill D."/>
            <person name="Huminiecki L."/>
            <person name="Iacono M."/>
            <person name="Ikeo K."/>
            <person name="Iwama A."/>
            <person name="Ishikawa T."/>
            <person name="Jakt M."/>
            <person name="Kanapin A."/>
            <person name="Katoh M."/>
            <person name="Kawasawa Y."/>
            <person name="Kelso J."/>
            <person name="Kitamura H."/>
            <person name="Kitano H."/>
            <person name="Kollias G."/>
            <person name="Krishnan S.P."/>
            <person name="Kruger A."/>
            <person name="Kummerfeld S.K."/>
            <person name="Kurochkin I.V."/>
            <person name="Lareau L.F."/>
            <person name="Lazarevic D."/>
            <person name="Lipovich L."/>
            <person name="Liu J."/>
            <person name="Liuni S."/>
            <person name="McWilliam S."/>
            <person name="Madan Babu M."/>
            <person name="Madera M."/>
            <person name="Marchionni L."/>
            <person name="Matsuda H."/>
            <person name="Matsuzawa S."/>
            <person name="Miki H."/>
            <person name="Mignone F."/>
            <person name="Miyake S."/>
            <person name="Morris K."/>
            <person name="Mottagui-Tabar S."/>
            <person name="Mulder N."/>
            <person name="Nakano N."/>
            <person name="Nakauchi H."/>
            <person name="Ng P."/>
            <person name="Nilsson R."/>
            <person name="Nishiguchi S."/>
            <person name="Nishikawa S."/>
            <person name="Nori F."/>
            <person name="Ohara O."/>
            <person name="Okazaki Y."/>
            <person name="Orlando V."/>
            <person name="Pang K.C."/>
            <person name="Pavan W.J."/>
            <person name="Pavesi G."/>
            <person name="Pesole G."/>
            <person name="Petrovsky N."/>
            <person name="Piazza S."/>
            <person name="Reed J."/>
            <person name="Reid J.F."/>
            <person name="Ring B.Z."/>
            <person name="Ringwald M."/>
            <person name="Rost B."/>
            <person name="Ruan Y."/>
            <person name="Salzberg S.L."/>
            <person name="Sandelin A."/>
            <person name="Schneider C."/>
            <person name="Schoenbach C."/>
            <person name="Sekiguchi K."/>
            <person name="Semple C.A."/>
            <person name="Seno S."/>
            <person name="Sessa L."/>
            <person name="Sheng Y."/>
            <person name="Shibata Y."/>
            <person name="Shimada H."/>
            <person name="Shimada K."/>
            <person name="Silva D."/>
            <person name="Sinclair B."/>
            <person name="Sperling S."/>
            <person name="Stupka E."/>
            <person name="Sugiura K."/>
            <person name="Sultana R."/>
            <person name="Takenaka Y."/>
            <person name="Taki K."/>
            <person name="Tammoja K."/>
            <person name="Tan S.L."/>
            <person name="Tang S."/>
            <person name="Taylor M.S."/>
            <person name="Tegner J."/>
            <person name="Teichmann S.A."/>
            <person name="Ueda H.R."/>
            <person name="van Nimwegen E."/>
            <person name="Verardo R."/>
            <person name="Wei C.L."/>
            <person name="Yagi K."/>
            <person name="Yamanishi H."/>
            <person name="Zabarovsky E."/>
            <person name="Zhu S."/>
            <person name="Zimmer A."/>
            <person name="Hide W."/>
            <person name="Bult C."/>
            <person name="Grimmond S.M."/>
            <person name="Teasdale R.D."/>
            <person name="Liu E.T."/>
            <person name="Brusic V."/>
            <person name="Quackenbush J."/>
            <person name="Wahlestedt C."/>
            <person name="Mattick J.S."/>
            <person name="Hume D.A."/>
            <person name="Kai C."/>
            <person name="Sasaki D."/>
            <person name="Tomaru Y."/>
            <person name="Fukuda S."/>
            <person name="Kanamori-Katayama M."/>
            <person name="Suzuki M."/>
            <person name="Aoki J."/>
            <person name="Arakawa T."/>
            <person name="Iida J."/>
            <person name="Imamura K."/>
            <person name="Itoh M."/>
            <person name="Kato T."/>
            <person name="Kawaji H."/>
            <person name="Kawagashira N."/>
            <person name="Kawashima T."/>
            <person name="Kojima M."/>
            <person name="Kondo S."/>
            <person name="Konno H."/>
            <person name="Nakano K."/>
            <person name="Ninomiya N."/>
            <person name="Nishio T."/>
            <person name="Okada M."/>
            <person name="Plessy C."/>
            <person name="Shibata K."/>
            <person name="Shiraki T."/>
            <person name="Suzuki S."/>
            <person name="Tagami M."/>
            <person name="Waki K."/>
            <person name="Watahiki A."/>
            <person name="Okamura-Oho Y."/>
            <person name="Suzuki H."/>
            <person name="Kawai J."/>
            <person name="Hayashizaki Y."/>
        </authorList>
    </citation>
    <scope>NUCLEOTIDE SEQUENCE [LARGE SCALE MRNA]</scope>
    <scope>VARIANT THR-209</scope>
    <source>
        <strain>C57BL/6J</strain>
        <strain>NOD</strain>
        <tissue>Adipose tissue</tissue>
        <tissue>Bone marrow</tissue>
        <tissue>Dendritic cell</tissue>
        <tissue>Spleen</tissue>
    </source>
</reference>
<reference key="4">
    <citation type="journal article" date="2004" name="Genome Res.">
        <title>The status, quality, and expansion of the NIH full-length cDNA project: the Mammalian Gene Collection (MGC).</title>
        <authorList>
            <consortium name="The MGC Project Team"/>
        </authorList>
    </citation>
    <scope>NUCLEOTIDE SEQUENCE [LARGE SCALE MRNA]</scope>
    <source>
        <strain>FVB/N</strain>
        <tissue>Kidney</tissue>
        <tissue>Mammary tumor</tissue>
    </source>
</reference>
<reference key="5">
    <citation type="journal article" date="1999" name="Neuron">
        <title>Mena is required for neurulation and commissure formation.</title>
        <authorList>
            <person name="Lanier L.M."/>
            <person name="Gates M.A."/>
            <person name="Witke W."/>
            <person name="Menzies A.S."/>
            <person name="Wehman A.M."/>
            <person name="Macklis J.D."/>
            <person name="Kwiatkowski D."/>
            <person name="Soriano P."/>
            <person name="Gertler F.B."/>
        </authorList>
    </citation>
    <scope>DEVELOPMENTAL STAGE</scope>
    <scope>TISSUE SPECIFICITY</scope>
</reference>
<reference key="6">
    <citation type="journal article" date="2000" name="Cell">
        <title>Directed actin polymerization is the driving force for epithelial cell-cell adhesion.</title>
        <authorList>
            <person name="Vasioukhin V."/>
            <person name="Bauer C."/>
            <person name="Yin M."/>
            <person name="Fuchs E."/>
        </authorList>
    </citation>
    <scope>FUNCTION</scope>
    <scope>SUBCELLULAR LOCATION</scope>
</reference>
<reference key="7">
    <citation type="journal article" date="2000" name="J. Biol. Chem.">
        <title>Phosphorylation of the vasodilator-stimulated phosphoprotein regulates its interaction with actin.</title>
        <authorList>
            <person name="Harbeck B."/>
            <person name="Huttelmaier S."/>
            <person name="Schlueter K."/>
            <person name="Jockusch B.M."/>
            <person name="Illenberger S."/>
        </authorList>
    </citation>
    <scope>INTERACTION WITH ACTN1; PFN1; PFN2; VCL AND ZYX</scope>
    <scope>PHOSPHORYLATION AT SER-153 AND SER-235</scope>
    <scope>MUTAGENESIS OF SER-153; SER-235 AND THR-274</scope>
</reference>
<reference key="8">
    <citation type="journal article" date="2002" name="FEBS Lett.">
        <title>The vasodilator-stimulated phosphoprotein promotes actin polymerisation through direct binding to monomeric actin.</title>
        <authorList>
            <person name="Walders-Harbeck B."/>
            <person name="Khaitlina S.Y."/>
            <person name="Hinssen H."/>
            <person name="Jockusch B.M."/>
            <person name="Illenberger S."/>
        </authorList>
    </citation>
    <scope>INTERACTION WITH ACTG1</scope>
    <scope>PHOSPHORYLATION</scope>
    <scope>MUTAGENESIS OF 232-ARG-LYS-233</scope>
</reference>
<reference key="9">
    <citation type="journal article" date="2003" name="J. Biol. Chem.">
        <title>Tuba, a novel protein containing bin/amphiphysin/Rvs and Dbl homology domains, links dynamin to regulation of the actin cytoskeleton.</title>
        <authorList>
            <person name="Salazar M.A."/>
            <person name="Kwiatkowski A.V."/>
            <person name="Pellegrini L."/>
            <person name="Cestra G."/>
            <person name="Butler M.H."/>
            <person name="Rossman K.L."/>
            <person name="Serna D.M."/>
            <person name="Sondek J."/>
            <person name="Gertler F.B."/>
            <person name="De Camilli P."/>
        </authorList>
    </citation>
    <scope>INTERACTION WITH DNMBP</scope>
</reference>
<reference key="10">
    <citation type="journal article" date="2005" name="FEBS Lett.">
        <title>PREL1 provides a link from Ras signalling to the actin cytoskeleton via Ena/VASP proteins.</title>
        <authorList>
            <person name="Jenzora A."/>
            <person name="Behrendt B."/>
            <person name="Small J.V."/>
            <person name="Wehland J."/>
            <person name="Stradal T.E."/>
        </authorList>
    </citation>
    <scope>INTERACTION WITH APBB1IP</scope>
</reference>
<reference key="11">
    <citation type="journal article" date="2007" name="Proc. Natl. Acad. Sci. U.S.A.">
        <title>Large-scale phosphorylation analysis of mouse liver.</title>
        <authorList>
            <person name="Villen J."/>
            <person name="Beausoleil S.A."/>
            <person name="Gerber S.A."/>
            <person name="Gygi S.P."/>
        </authorList>
    </citation>
    <scope>IDENTIFICATION BY MASS SPECTROMETRY [LARGE SCALE ANALYSIS]</scope>
    <source>
        <tissue>Liver</tissue>
    </source>
</reference>
<reference key="12">
    <citation type="journal article" date="2009" name="Immunity">
        <title>The phagosomal proteome in interferon-gamma-activated macrophages.</title>
        <authorList>
            <person name="Trost M."/>
            <person name="English L."/>
            <person name="Lemieux S."/>
            <person name="Courcelles M."/>
            <person name="Desjardins M."/>
            <person name="Thibault P."/>
        </authorList>
    </citation>
    <scope>IDENTIFICATION BY MASS SPECTROMETRY [LARGE SCALE ANALYSIS]</scope>
</reference>
<reference key="13">
    <citation type="journal article" date="2010" name="Cell">
        <title>A tissue-specific atlas of mouse protein phosphorylation and expression.</title>
        <authorList>
            <person name="Huttlin E.L."/>
            <person name="Jedrychowski M.P."/>
            <person name="Elias J.E."/>
            <person name="Goswami T."/>
            <person name="Rad R."/>
            <person name="Beausoleil S.A."/>
            <person name="Villen J."/>
            <person name="Haas W."/>
            <person name="Sowa M.E."/>
            <person name="Gygi S.P."/>
        </authorList>
    </citation>
    <scope>PHOSPHORYLATION [LARGE SCALE ANALYSIS] AT SER-235; SER-317 AND SER-320</scope>
    <scope>IDENTIFICATION BY MASS SPECTROMETRY [LARGE SCALE ANALYSIS]</scope>
    <source>
        <tissue>Brain</tissue>
        <tissue>Brown adipose tissue</tissue>
        <tissue>Heart</tissue>
        <tissue>Kidney</tissue>
        <tissue>Liver</tissue>
        <tissue>Lung</tissue>
        <tissue>Pancreas</tissue>
        <tissue>Spleen</tissue>
        <tissue>Testis</tissue>
    </source>
</reference>
<reference key="14">
    <citation type="journal article" date="2011" name="Biochem. Biophys. Res. Commun.">
        <title>Phosphorylation of VASP by AMPK alters actin binding and occurs at a novel site.</title>
        <authorList>
            <person name="Thomson D.M."/>
            <person name="Ascione M.P."/>
            <person name="Grange J."/>
            <person name="Nelson C."/>
            <person name="Hansen M.D."/>
        </authorList>
    </citation>
    <scope>PHOSPHORYLATION AT SER-318</scope>
</reference>
<gene>
    <name type="primary">Vasp</name>
</gene>
<comment type="function">
    <text evidence="1 8">Ena/VASP proteins are actin-associated proteins involved in a range of processes dependent on cytoskeleton remodeling and cell polarity such as axon guidance, lamellipodial and filopodial dynamics, platelet activation and cell migration. VASP promotes actin filament elongation. It protects the barbed end of growing actin filaments against capping and increases the rate of actin polymerization in the presence of capping protein. VASP stimulates actin filament elongation by promoting the transfer of profilin-bound actin monomers onto the barbed end of growing actin filaments. Plays a role in actin-based mobility of Listeria monocytogenes in host cells. Regulates actin dynamics in platelets and plays an important role in regulating platelet aggregation (By similarity).</text>
</comment>
<comment type="subunit">
    <text evidence="1">Homotetramer (By similarity). Interacts with PFN1, PFN2, LPP, ACTN1 and ACTG1. Interacts, via the EVH1 domain, with the Pro-rich regions of ZYX. This interaction is important for targeting to focal adhesions and the formation of actin-rich structures at the apical surface of cells. Interacts, via the EVH1 domain, with the Pro-rich domain of Listeria monocytogenes actA. Interacts with APBB1IP. Interacts, via the Pro-rich domain, with the C-terminal SH3 domain of DNMBP. Interacts weakly with MEFV (By similarity).</text>
</comment>
<comment type="subcellular location">
    <subcellularLocation>
        <location evidence="8">Cytoplasm</location>
    </subcellularLocation>
    <subcellularLocation>
        <location evidence="8">Cytoplasm</location>
        <location evidence="8">Cytoskeleton</location>
    </subcellularLocation>
    <subcellularLocation>
        <location evidence="8">Cell junction</location>
        <location evidence="8">Focal adhesion</location>
    </subcellularLocation>
    <subcellularLocation>
        <location evidence="1">Cell junction</location>
        <location evidence="1">Tight junction</location>
    </subcellularLocation>
    <subcellularLocation>
        <location evidence="8">Cell projection</location>
        <location evidence="8">Lamellipodium membrane</location>
    </subcellularLocation>
    <subcellularLocation>
        <location evidence="8">Cell projection</location>
        <location evidence="8">Filopodium membrane</location>
    </subcellularLocation>
    <text evidence="1">Targeted to stress fibers and focal adhesions through interaction with a number of proteins including MRL family members. Localizes to the plasma membrane in protruding lamellipodia and filopodial tips. Stimulation by thrombin or PMA, also translocates VASP to focal adhesions. Localized along the sides of actin filaments throughout the peripheral cytoplasm under basal conditions (By similarity). In pre-apoptotic cells, colocalizes with MEFV in large specks (pyroptosomes) (By similarity).</text>
</comment>
<comment type="tissue specificity">
    <text evidence="6">Highly expressed in thymus and spleen. Lower levels in lung, ovary, placenta and fat.</text>
</comment>
<comment type="developmental stage">
    <text evidence="6">Expressed constantly throughout brain development, with lower levels in adulthood.</text>
</comment>
<comment type="domain">
    <text>The EVH2 domain is comprised of 3 regions. Block A is a thymosin-like domain required for G-actin binding. The KLKR motif within this block is essential for the G-actin binding and for actin polymerization. Block B is required for F-actin binding and subcellular location, and Block C for tetramerization.</text>
</comment>
<comment type="domain">
    <text evidence="1">The WH1 domain mediates interaction with XIRP1.</text>
</comment>
<comment type="PTM">
    <text evidence="7 9 10 12">Major substrate for cAMP-dependent (PKA) and cGMP-dependent protein kinase (PKG) in platelets. The preferred site for PKA is Ser-153, the preferred site for PKG, Ser-235. In ADP-activated platelets, phosphorylation by PKA or PKG/PRKG1 on Ser-153 leads to fibrinogen receptor inhibition. Phosphorylation on Thr-274 requires prior phosphorylation on Ser-153 and Ser-235. In response to phorbol ester (PMA) stimulation, phosphorylated by PKC/PRKCA. In response to thrombin, phosphorylated by both PKC and ROCK1. Phosphorylation at Thr-274 by AMPK does not require prior phosphorylation at Ser-153 or Ser-235. Phosphorylation at Ser-153 by PKA is required for localization to the tight junctions in epithelial cells. Phosphorylation modulates F-actin binding, actin filament elongation and platelet activation. Phosphorylation at Ser-318 by AMPK also alters actin filament binding. Carbon monoxide (CO) promotes phosphorylation at Ser-153, while nitric oxide (NO) promotes phosphorylation at Ser-153, but also at Ser-235.</text>
</comment>
<comment type="similarity">
    <text evidence="14">Belongs to the Ena/VASP family.</text>
</comment>
<comment type="sequence caution" evidence="14">
    <conflict type="erroneous gene model prediction">
        <sequence resource="EMBL-CDS" id="CAA67108"/>
    </conflict>
</comment>
<name>VASP_MOUSE</name>
<accession>P70460</accession>
<accession>Q3TAP0</accession>
<accession>Q3TCD2</accession>
<accession>Q3U0C2</accession>
<accession>Q3UDF1</accession>
<accession>Q91VD2</accession>
<accession>Q9R214</accession>
<keyword id="KW-0002">3D-structure</keyword>
<keyword id="KW-0007">Acetylation</keyword>
<keyword id="KW-0009">Actin-binding</keyword>
<keyword id="KW-0965">Cell junction</keyword>
<keyword id="KW-1003">Cell membrane</keyword>
<keyword id="KW-0966">Cell projection</keyword>
<keyword id="KW-0175">Coiled coil</keyword>
<keyword id="KW-0963">Cytoplasm</keyword>
<keyword id="KW-0206">Cytoskeleton</keyword>
<keyword id="KW-0472">Membrane</keyword>
<keyword id="KW-0597">Phosphoprotein</keyword>
<keyword id="KW-1185">Reference proteome</keyword>
<keyword id="KW-0677">Repeat</keyword>
<keyword id="KW-0729">SH3-binding</keyword>
<keyword id="KW-0796">Tight junction</keyword>
<protein>
    <recommendedName>
        <fullName>Vasodilator-stimulated phosphoprotein</fullName>
        <shortName>VASP</shortName>
    </recommendedName>
</protein>
<sequence length="375" mass="39667">MSETVICSSRATVMLYDDSNKRWLPAGTGPQAFSRVQIYHNPTANSFRVVGRKMQPDQQVVINCAIIRGVKYNQATPIFHQWRDARQVWGLNFGSKEDAIQFATGMANALEALEGGGPPPAPAPPAWSAQNGPSPEELEQQKRQPEHMERRVSNAGGPPAPPAGGPPPPPGPPPPPGPPPPPGLPSSGVSGAGHGAGAAPPPAPPLPTAQGPNSGGSGAPGLAAAIAGAKLRKVSKQEEASGGPLAPKAENSRSTGGGLMEEMNAMLARRRKATQVGEKPPKDESASEESEARLPAQSEPVRRPWEKNSTTLPRMKSSSSVTTSEAHPSTPCSSDDSDLERVKQELLEEVRKELQKMKEEIIEVFVQELRKRGSP</sequence>
<feature type="initiator methionine" description="Removed" evidence="2">
    <location>
        <position position="1"/>
    </location>
</feature>
<feature type="chain" id="PRO_0000065768" description="Vasodilator-stimulated phosphoprotein">
    <location>
        <begin position="2"/>
        <end position="375"/>
    </location>
</feature>
<feature type="domain" description="WH1" evidence="4">
    <location>
        <begin position="2"/>
        <end position="113"/>
    </location>
</feature>
<feature type="repeat" description="1">
    <location>
        <begin position="340"/>
        <end position="354"/>
    </location>
</feature>
<feature type="repeat" description="2">
    <location>
        <begin position="355"/>
        <end position="369"/>
    </location>
</feature>
<feature type="region of interest" description="Disordered" evidence="5">
    <location>
        <begin position="111"/>
        <end position="340"/>
    </location>
</feature>
<feature type="region of interest" description="EVH2">
    <location>
        <begin position="221"/>
        <end position="373"/>
    </location>
</feature>
<feature type="region of interest" description="EVH2 block A">
    <location>
        <begin position="221"/>
        <end position="241"/>
    </location>
</feature>
<feature type="region of interest" description="EVH2 block B">
    <location>
        <begin position="257"/>
        <end position="274"/>
    </location>
</feature>
<feature type="region of interest" description="EVH2 block C">
    <location>
        <begin position="338"/>
        <end position="372"/>
    </location>
</feature>
<feature type="region of interest" description="2 X 15 AA tandem repeats of L-[EQ]-[KR] [MV]-K-[EQ]-E-[IL]-[IL]-E-[AEV]-[FV]-[KRV]-[KQ]-E">
    <location>
        <begin position="339"/>
        <end position="368"/>
    </location>
</feature>
<feature type="coiled-coil region" evidence="3">
    <location>
        <begin position="337"/>
        <end position="367"/>
    </location>
</feature>
<feature type="short sequence motif" description="KLKR">
    <location>
        <begin position="230"/>
        <end position="233"/>
    </location>
</feature>
<feature type="compositionally biased region" description="Basic and acidic residues" evidence="5">
    <location>
        <begin position="139"/>
        <end position="152"/>
    </location>
</feature>
<feature type="compositionally biased region" description="Pro residues" evidence="5">
    <location>
        <begin position="158"/>
        <end position="184"/>
    </location>
</feature>
<feature type="compositionally biased region" description="Low complexity" evidence="5">
    <location>
        <begin position="220"/>
        <end position="229"/>
    </location>
</feature>
<feature type="compositionally biased region" description="Polar residues" evidence="5">
    <location>
        <begin position="307"/>
        <end position="334"/>
    </location>
</feature>
<feature type="modified residue" description="N-acetylserine" evidence="2">
    <location>
        <position position="2"/>
    </location>
</feature>
<feature type="modified residue" description="Phosphotyrosine" evidence="2">
    <location>
        <position position="39"/>
    </location>
</feature>
<feature type="modified residue" description="Phosphoserine" evidence="2">
    <location>
        <position position="46"/>
    </location>
</feature>
<feature type="modified residue" description="Phosphoserine; by PKA, PKC, PKG/PRKG1 and ROCK1" evidence="9">
    <location>
        <position position="153"/>
    </location>
</feature>
<feature type="modified residue" description="Phosphoserine; by PKA and PKG" evidence="9 15">
    <location>
        <position position="235"/>
    </location>
</feature>
<feature type="modified residue" description="Phosphothreonine; by PKA, PKG/PRKG1 and AMPK" evidence="2">
    <location>
        <position position="274"/>
    </location>
</feature>
<feature type="modified residue" description="N6-acetyllysine" evidence="2">
    <location>
        <position position="279"/>
    </location>
</feature>
<feature type="modified residue" description="Phosphoserine" evidence="2">
    <location>
        <position position="309"/>
    </location>
</feature>
<feature type="modified residue" description="Phosphothreonine" evidence="2">
    <location>
        <position position="311"/>
    </location>
</feature>
<feature type="modified residue" description="Phosphoserine" evidence="15">
    <location>
        <position position="317"/>
    </location>
</feature>
<feature type="modified residue" description="Phosphoserine; by AMPK" evidence="12">
    <location>
        <position position="318"/>
    </location>
</feature>
<feature type="modified residue" description="Phosphoserine" evidence="15">
    <location>
        <position position="320"/>
    </location>
</feature>
<feature type="sequence variant" evidence="11 13">
    <original>A</original>
    <variation>T</variation>
    <location>
        <position position="209"/>
    </location>
</feature>
<feature type="mutagenesis site" description="Reduces actin polymerization to a lesser extent than wild-type. Greater effect on actin polymerization; when associated with D-235 and E-274." evidence="9">
    <original>S</original>
    <variation>D</variation>
    <location>
        <position position="153"/>
    </location>
</feature>
<feature type="mutagenesis site" description="Reduced binding to monomeric actin. No VASP-induced actin polymerization." evidence="10">
    <original>RK</original>
    <variation>GE</variation>
    <variation>EE</variation>
    <location>
        <begin position="232"/>
        <end position="233"/>
    </location>
</feature>
<feature type="mutagenesis site" description="Reduces actin polymerization to a lesser extent than wild-type." evidence="9">
    <original>S</original>
    <variation>D</variation>
    <location>
        <position position="235"/>
    </location>
</feature>
<feature type="mutagenesis site" description="Reduces actin polymerization to a lesser extent than wild-type." evidence="9">
    <original>T</original>
    <variation>E</variation>
    <location>
        <position position="274"/>
    </location>
</feature>
<feature type="sequence conflict" description="In Ref. 3; BAE42025." evidence="14" ref="3">
    <location>
        <begin position="106"/>
        <end position="115"/>
    </location>
</feature>
<feature type="sequence conflict" description="In Ref. 3; BAE33933." evidence="14" ref="3">
    <location>
        <position position="237"/>
    </location>
</feature>
<feature type="sequence conflict" description="In Ref. 3; BAE29310." evidence="14" ref="3">
    <original>S</original>
    <variation>Y</variation>
    <location>
        <position position="337"/>
    </location>
</feature>
<dbReference type="EMBL" id="X98475">
    <property type="protein sequence ID" value="CAA67108.1"/>
    <property type="status" value="ALT_SEQ"/>
    <property type="molecule type" value="Genomic_DNA"/>
</dbReference>
<dbReference type="EMBL" id="AF084548">
    <property type="protein sequence ID" value="AAD16045.1"/>
    <property type="molecule type" value="mRNA"/>
</dbReference>
<dbReference type="EMBL" id="AK140329">
    <property type="protein sequence ID" value="BAE24338.1"/>
    <property type="molecule type" value="mRNA"/>
</dbReference>
<dbReference type="EMBL" id="AK150103">
    <property type="protein sequence ID" value="BAE29310.1"/>
    <property type="molecule type" value="mRNA"/>
</dbReference>
<dbReference type="EMBL" id="AK157021">
    <property type="protein sequence ID" value="BAE33933.1"/>
    <property type="molecule type" value="mRNA"/>
</dbReference>
<dbReference type="EMBL" id="AK170780">
    <property type="protein sequence ID" value="BAE42025.1"/>
    <property type="molecule type" value="mRNA"/>
</dbReference>
<dbReference type="EMBL" id="AK171715">
    <property type="protein sequence ID" value="BAE42628.1"/>
    <property type="molecule type" value="mRNA"/>
</dbReference>
<dbReference type="EMBL" id="BC010223">
    <property type="protein sequence ID" value="AAH10223.1"/>
    <property type="molecule type" value="mRNA"/>
</dbReference>
<dbReference type="EMBL" id="BC015289">
    <property type="protein sequence ID" value="AAH15289.1"/>
    <property type="molecule type" value="mRNA"/>
</dbReference>
<dbReference type="CCDS" id="CCDS52056.1"/>
<dbReference type="RefSeq" id="NP_001268950.1">
    <property type="nucleotide sequence ID" value="NM_001282021.1"/>
</dbReference>
<dbReference type="RefSeq" id="NP_001268951.1">
    <property type="nucleotide sequence ID" value="NM_001282022.1"/>
</dbReference>
<dbReference type="RefSeq" id="NP_033525.2">
    <property type="nucleotide sequence ID" value="NM_009499.3"/>
</dbReference>
<dbReference type="PDB" id="2V8C">
    <property type="method" value="X-ray"/>
    <property type="resolution" value="1.98 A"/>
    <property type="chains" value="C=165-184"/>
</dbReference>
<dbReference type="PDBsum" id="2V8C"/>
<dbReference type="SMR" id="P70460"/>
<dbReference type="BioGRID" id="204499">
    <property type="interactions" value="8"/>
</dbReference>
<dbReference type="DIP" id="DIP-29360N"/>
<dbReference type="FunCoup" id="P70460">
    <property type="interactions" value="1359"/>
</dbReference>
<dbReference type="IntAct" id="P70460">
    <property type="interactions" value="4"/>
</dbReference>
<dbReference type="MINT" id="P70460"/>
<dbReference type="STRING" id="10090.ENSMUSP00000032561"/>
<dbReference type="iPTMnet" id="P70460"/>
<dbReference type="PhosphoSitePlus" id="P70460"/>
<dbReference type="SwissPalm" id="P70460"/>
<dbReference type="jPOST" id="P70460"/>
<dbReference type="PaxDb" id="10090-ENSMUSP00000032561"/>
<dbReference type="PeptideAtlas" id="P70460"/>
<dbReference type="ProteomicsDB" id="300166"/>
<dbReference type="Pumba" id="P70460"/>
<dbReference type="Antibodypedia" id="1491">
    <property type="antibodies" value="1138 antibodies from 46 providers"/>
</dbReference>
<dbReference type="DNASU" id="22323"/>
<dbReference type="Ensembl" id="ENSMUST00000032561.9">
    <property type="protein sequence ID" value="ENSMUSP00000032561.9"/>
    <property type="gene ID" value="ENSMUSG00000030403.10"/>
</dbReference>
<dbReference type="GeneID" id="22323"/>
<dbReference type="KEGG" id="mmu:22323"/>
<dbReference type="UCSC" id="uc009fle.2">
    <property type="organism name" value="mouse"/>
</dbReference>
<dbReference type="AGR" id="MGI:109268"/>
<dbReference type="CTD" id="7408"/>
<dbReference type="MGI" id="MGI:109268">
    <property type="gene designation" value="Vasp"/>
</dbReference>
<dbReference type="VEuPathDB" id="HostDB:ENSMUSG00000030403"/>
<dbReference type="eggNOG" id="KOG4590">
    <property type="taxonomic scope" value="Eukaryota"/>
</dbReference>
<dbReference type="GeneTree" id="ENSGT00940000156765"/>
<dbReference type="HOGENOM" id="CLU_017790_0_0_1"/>
<dbReference type="InParanoid" id="P70460"/>
<dbReference type="OMA" id="TSEAHPC"/>
<dbReference type="OrthoDB" id="31170at2759"/>
<dbReference type="PhylomeDB" id="P70460"/>
<dbReference type="TreeFam" id="TF321411"/>
<dbReference type="Reactome" id="R-MMU-376176">
    <property type="pathway name" value="Signaling by ROBO receptors"/>
</dbReference>
<dbReference type="Reactome" id="R-MMU-446353">
    <property type="pathway name" value="Cell-extracellular matrix interactions"/>
</dbReference>
<dbReference type="BioGRID-ORCS" id="22323">
    <property type="hits" value="1 hit in 77 CRISPR screens"/>
</dbReference>
<dbReference type="ChiTaRS" id="Vasp">
    <property type="organism name" value="mouse"/>
</dbReference>
<dbReference type="EvolutionaryTrace" id="P70460"/>
<dbReference type="PRO" id="PR:P70460"/>
<dbReference type="Proteomes" id="UP000000589">
    <property type="component" value="Chromosome 7"/>
</dbReference>
<dbReference type="RNAct" id="P70460">
    <property type="molecule type" value="protein"/>
</dbReference>
<dbReference type="Bgee" id="ENSMUSG00000030403">
    <property type="expression patterns" value="Expressed in granulocyte and 250 other cell types or tissues"/>
</dbReference>
<dbReference type="GO" id="GO:0005923">
    <property type="term" value="C:bicellular tight junction"/>
    <property type="evidence" value="ECO:0007669"/>
    <property type="project" value="UniProtKB-SubCell"/>
</dbReference>
<dbReference type="GO" id="GO:0005856">
    <property type="term" value="C:cytoskeleton"/>
    <property type="evidence" value="ECO:0007669"/>
    <property type="project" value="UniProtKB-SubCell"/>
</dbReference>
<dbReference type="GO" id="GO:0005829">
    <property type="term" value="C:cytosol"/>
    <property type="evidence" value="ECO:0000304"/>
    <property type="project" value="Reactome"/>
</dbReference>
<dbReference type="GO" id="GO:0030175">
    <property type="term" value="C:filopodium"/>
    <property type="evidence" value="ECO:0000314"/>
    <property type="project" value="MGI"/>
</dbReference>
<dbReference type="GO" id="GO:0031527">
    <property type="term" value="C:filopodium membrane"/>
    <property type="evidence" value="ECO:0007669"/>
    <property type="project" value="UniProtKB-SubCell"/>
</dbReference>
<dbReference type="GO" id="GO:0005925">
    <property type="term" value="C:focal adhesion"/>
    <property type="evidence" value="ECO:0000314"/>
    <property type="project" value="MGI"/>
</dbReference>
<dbReference type="GO" id="GO:0098978">
    <property type="term" value="C:glutamatergic synapse"/>
    <property type="evidence" value="ECO:0007669"/>
    <property type="project" value="Ensembl"/>
</dbReference>
<dbReference type="GO" id="GO:0030027">
    <property type="term" value="C:lamellipodium"/>
    <property type="evidence" value="ECO:0000314"/>
    <property type="project" value="MGI"/>
</dbReference>
<dbReference type="GO" id="GO:0031258">
    <property type="term" value="C:lamellipodium membrane"/>
    <property type="evidence" value="ECO:0007669"/>
    <property type="project" value="UniProtKB-SubCell"/>
</dbReference>
<dbReference type="GO" id="GO:0098794">
    <property type="term" value="C:postsynapse"/>
    <property type="evidence" value="ECO:0007669"/>
    <property type="project" value="Ensembl"/>
</dbReference>
<dbReference type="GO" id="GO:0003779">
    <property type="term" value="F:actin binding"/>
    <property type="evidence" value="ECO:0007669"/>
    <property type="project" value="UniProtKB-KW"/>
</dbReference>
<dbReference type="GO" id="GO:0005522">
    <property type="term" value="F:profilin binding"/>
    <property type="evidence" value="ECO:0007669"/>
    <property type="project" value="Ensembl"/>
</dbReference>
<dbReference type="GO" id="GO:0017124">
    <property type="term" value="F:SH3 domain binding"/>
    <property type="evidence" value="ECO:0007669"/>
    <property type="project" value="UniProtKB-KW"/>
</dbReference>
<dbReference type="GO" id="GO:0030036">
    <property type="term" value="P:actin cytoskeleton organization"/>
    <property type="evidence" value="ECO:0000316"/>
    <property type="project" value="MGI"/>
</dbReference>
<dbReference type="GO" id="GO:0008154">
    <property type="term" value="P:actin polymerization or depolymerization"/>
    <property type="evidence" value="ECO:0007669"/>
    <property type="project" value="InterPro"/>
</dbReference>
<dbReference type="GO" id="GO:0007411">
    <property type="term" value="P:axon guidance"/>
    <property type="evidence" value="ECO:0000316"/>
    <property type="project" value="MGI"/>
</dbReference>
<dbReference type="GO" id="GO:0001843">
    <property type="term" value="P:neural tube closure"/>
    <property type="evidence" value="ECO:0000316"/>
    <property type="project" value="MGI"/>
</dbReference>
<dbReference type="GO" id="GO:0030838">
    <property type="term" value="P:positive regulation of actin filament polymerization"/>
    <property type="evidence" value="ECO:0007669"/>
    <property type="project" value="Ensembl"/>
</dbReference>
<dbReference type="GO" id="GO:0051289">
    <property type="term" value="P:protein homotetramerization"/>
    <property type="evidence" value="ECO:0007669"/>
    <property type="project" value="InterPro"/>
</dbReference>
<dbReference type="CDD" id="cd01207">
    <property type="entry name" value="EVH1_Ena_VASP-like"/>
    <property type="match status" value="1"/>
</dbReference>
<dbReference type="CDD" id="cd22185">
    <property type="entry name" value="WH2_hVASP-like"/>
    <property type="match status" value="1"/>
</dbReference>
<dbReference type="FunFam" id="1.20.5.1160:FF:000005">
    <property type="entry name" value="vasodilator-stimulated phosphoprotein isoform X2"/>
    <property type="match status" value="1"/>
</dbReference>
<dbReference type="FunFam" id="2.30.29.30:FF:000047">
    <property type="entry name" value="vasodilator-stimulated phosphoprotein isoform X2"/>
    <property type="match status" value="1"/>
</dbReference>
<dbReference type="Gene3D" id="2.30.29.30">
    <property type="entry name" value="Pleckstrin-homology domain (PH domain)/Phosphotyrosine-binding domain (PTB)"/>
    <property type="match status" value="1"/>
</dbReference>
<dbReference type="Gene3D" id="1.20.5.1160">
    <property type="entry name" value="Vasodilator-stimulated phosphoprotein"/>
    <property type="match status" value="1"/>
</dbReference>
<dbReference type="InterPro" id="IPR011993">
    <property type="entry name" value="PH-like_dom_sf"/>
</dbReference>
<dbReference type="InterPro" id="IPR017354">
    <property type="entry name" value="VASP/EVL"/>
</dbReference>
<dbReference type="InterPro" id="IPR038023">
    <property type="entry name" value="VASP_sf"/>
</dbReference>
<dbReference type="InterPro" id="IPR014885">
    <property type="entry name" value="VASP_tetra"/>
</dbReference>
<dbReference type="InterPro" id="IPR000697">
    <property type="entry name" value="WH1/EVH1_dom"/>
</dbReference>
<dbReference type="PANTHER" id="PTHR11202">
    <property type="entry name" value="SPROUTY-RELATED, EVH1 DOMAIN-CONTAINING PROTEIN FAMILY MEMBER"/>
    <property type="match status" value="1"/>
</dbReference>
<dbReference type="PANTHER" id="PTHR11202:SF12">
    <property type="entry name" value="VASODILATOR-STIMULATED PHOSPHOPROTEIN"/>
    <property type="match status" value="1"/>
</dbReference>
<dbReference type="Pfam" id="PF08776">
    <property type="entry name" value="VASP_tetra"/>
    <property type="match status" value="1"/>
</dbReference>
<dbReference type="Pfam" id="PF00568">
    <property type="entry name" value="WH1"/>
    <property type="match status" value="1"/>
</dbReference>
<dbReference type="PIRSF" id="PIRSF038010">
    <property type="entry name" value="Vasodilator_Phospo"/>
    <property type="match status" value="1"/>
</dbReference>
<dbReference type="SMART" id="SM00461">
    <property type="entry name" value="WH1"/>
    <property type="match status" value="1"/>
</dbReference>
<dbReference type="SUPFAM" id="SSF50729">
    <property type="entry name" value="PH domain-like"/>
    <property type="match status" value="1"/>
</dbReference>
<dbReference type="SUPFAM" id="SSF118370">
    <property type="entry name" value="Vasodilator-stimulated phosphoprotein, VASP, tetramerisation domain"/>
    <property type="match status" value="1"/>
</dbReference>
<dbReference type="PROSITE" id="PS50229">
    <property type="entry name" value="WH1"/>
    <property type="match status" value="1"/>
</dbReference>